<feature type="chain" id="PRO_0000313461" description="DNA ligase">
    <location>
        <begin position="1"/>
        <end position="652"/>
    </location>
</feature>
<feature type="domain" description="BRCT" evidence="1">
    <location>
        <begin position="577"/>
        <end position="652"/>
    </location>
</feature>
<feature type="active site" description="N6-AMP-lysine intermediate" evidence="1">
    <location>
        <position position="109"/>
    </location>
</feature>
<feature type="binding site" evidence="1">
    <location>
        <begin position="29"/>
        <end position="33"/>
    </location>
    <ligand>
        <name>NAD(+)</name>
        <dbReference type="ChEBI" id="CHEBI:57540"/>
    </ligand>
</feature>
<feature type="binding site" evidence="1">
    <location>
        <begin position="78"/>
        <end position="79"/>
    </location>
    <ligand>
        <name>NAD(+)</name>
        <dbReference type="ChEBI" id="CHEBI:57540"/>
    </ligand>
</feature>
<feature type="binding site" evidence="1">
    <location>
        <position position="107"/>
    </location>
    <ligand>
        <name>NAD(+)</name>
        <dbReference type="ChEBI" id="CHEBI:57540"/>
    </ligand>
</feature>
<feature type="binding site" evidence="1">
    <location>
        <position position="130"/>
    </location>
    <ligand>
        <name>NAD(+)</name>
        <dbReference type="ChEBI" id="CHEBI:57540"/>
    </ligand>
</feature>
<feature type="binding site" evidence="1">
    <location>
        <position position="164"/>
    </location>
    <ligand>
        <name>NAD(+)</name>
        <dbReference type="ChEBI" id="CHEBI:57540"/>
    </ligand>
</feature>
<feature type="binding site" evidence="1">
    <location>
        <position position="278"/>
    </location>
    <ligand>
        <name>NAD(+)</name>
        <dbReference type="ChEBI" id="CHEBI:57540"/>
    </ligand>
</feature>
<feature type="binding site" evidence="1">
    <location>
        <position position="302"/>
    </location>
    <ligand>
        <name>NAD(+)</name>
        <dbReference type="ChEBI" id="CHEBI:57540"/>
    </ligand>
</feature>
<feature type="binding site" evidence="1">
    <location>
        <position position="395"/>
    </location>
    <ligand>
        <name>Zn(2+)</name>
        <dbReference type="ChEBI" id="CHEBI:29105"/>
    </ligand>
</feature>
<feature type="binding site" evidence="1">
    <location>
        <position position="398"/>
    </location>
    <ligand>
        <name>Zn(2+)</name>
        <dbReference type="ChEBI" id="CHEBI:29105"/>
    </ligand>
</feature>
<feature type="binding site" evidence="1">
    <location>
        <position position="413"/>
    </location>
    <ligand>
        <name>Zn(2+)</name>
        <dbReference type="ChEBI" id="CHEBI:29105"/>
    </ligand>
</feature>
<feature type="binding site" evidence="1">
    <location>
        <position position="418"/>
    </location>
    <ligand>
        <name>Zn(2+)</name>
        <dbReference type="ChEBI" id="CHEBI:29105"/>
    </ligand>
</feature>
<evidence type="ECO:0000255" key="1">
    <source>
        <dbReference type="HAMAP-Rule" id="MF_01588"/>
    </source>
</evidence>
<sequence>MKKRIKELTDLLNRYRYDYYTKDAPSVSDSDYDKLYRELVTLEQSYPEYVLQDSPTQQVGGTILKGFEKYRHQYPLFSLQDAFSREELDAFDKRVKAEFPNATYLAELKIDGLSISLSYENGFLQVGATRGDGNIGENITENIKKIKDIPHQLSEPLTITVRGEAYMSRQSFKAINEARQENGETEFANPRNAAAGTLRQLDTSVVAKRQLATFLYQEASPTARNQQNEVLAELADLGFSVNPYYQLTSSMDEIWDFIKTIEAKRDQLAYDIDGVVIKVNSLAMQEELGFTVKAPRWAIAYKFPAEEKEAEILSVDWTVGRTGVVTPTANLTPVQLAGTTVSRATLHNVDYIAEKDIRIGDTVIVYKAGDIIPAVLNVVMSKRNQQEVMLIPKLCPSCGSELVHFEDEVALRCINPLCPSLIQRSLEHFASRDAMNITGLGPAIVEKLFLAGFVHDVADIYQLTKEDFMQLDGIKEKSADKLLAAIEASKSNSAEKLLFGLGIRHIGSKVSRLILEVYGDISALLTAKEEEIARIDGLGSTIAQSLTQYFEQKTAAILVDELKTAGVNMHYSGQKVNSDAALFGLTVVLTGKLNQLNRNEAKDKLEALGAKVTGSVSKKTDLVIAGSDAGSKLEKAKSLGIRIEDEDWLRKL</sequence>
<reference key="1">
    <citation type="journal article" date="2006" name="Proc. Natl. Acad. Sci. U.S.A.">
        <title>Molecular genetic anatomy of inter- and intraserotype variation in the human bacterial pathogen group A Streptococcus.</title>
        <authorList>
            <person name="Beres S.B."/>
            <person name="Richter E.W."/>
            <person name="Nagiec M.J."/>
            <person name="Sumby P."/>
            <person name="Porcella S.F."/>
            <person name="DeLeo F.R."/>
            <person name="Musser J.M."/>
        </authorList>
    </citation>
    <scope>NUCLEOTIDE SEQUENCE [LARGE SCALE GENOMIC DNA]</scope>
    <source>
        <strain>MGAS10270</strain>
    </source>
</reference>
<accession>Q1JHP3</accession>
<name>DNLJ_STRPD</name>
<protein>
    <recommendedName>
        <fullName evidence="1">DNA ligase</fullName>
        <ecNumber evidence="1">6.5.1.2</ecNumber>
    </recommendedName>
    <alternativeName>
        <fullName evidence="1">Polydeoxyribonucleotide synthase [NAD(+)]</fullName>
    </alternativeName>
</protein>
<dbReference type="EC" id="6.5.1.2" evidence="1"/>
<dbReference type="EMBL" id="CP000260">
    <property type="protein sequence ID" value="ABF33693.1"/>
    <property type="molecule type" value="Genomic_DNA"/>
</dbReference>
<dbReference type="RefSeq" id="WP_011017608.1">
    <property type="nucleotide sequence ID" value="NZ_CVUH01000002.1"/>
</dbReference>
<dbReference type="SMR" id="Q1JHP3"/>
<dbReference type="KEGG" id="sph:MGAS10270_Spy0628"/>
<dbReference type="HOGENOM" id="CLU_007764_2_1_9"/>
<dbReference type="Proteomes" id="UP000002436">
    <property type="component" value="Chromosome"/>
</dbReference>
<dbReference type="GO" id="GO:0005829">
    <property type="term" value="C:cytosol"/>
    <property type="evidence" value="ECO:0007669"/>
    <property type="project" value="TreeGrafter"/>
</dbReference>
<dbReference type="GO" id="GO:0003677">
    <property type="term" value="F:DNA binding"/>
    <property type="evidence" value="ECO:0007669"/>
    <property type="project" value="InterPro"/>
</dbReference>
<dbReference type="GO" id="GO:0003911">
    <property type="term" value="F:DNA ligase (NAD+) activity"/>
    <property type="evidence" value="ECO:0007669"/>
    <property type="project" value="UniProtKB-UniRule"/>
</dbReference>
<dbReference type="GO" id="GO:0046872">
    <property type="term" value="F:metal ion binding"/>
    <property type="evidence" value="ECO:0007669"/>
    <property type="project" value="UniProtKB-KW"/>
</dbReference>
<dbReference type="GO" id="GO:0006281">
    <property type="term" value="P:DNA repair"/>
    <property type="evidence" value="ECO:0007669"/>
    <property type="project" value="UniProtKB-KW"/>
</dbReference>
<dbReference type="GO" id="GO:0006260">
    <property type="term" value="P:DNA replication"/>
    <property type="evidence" value="ECO:0007669"/>
    <property type="project" value="UniProtKB-KW"/>
</dbReference>
<dbReference type="CDD" id="cd17748">
    <property type="entry name" value="BRCT_DNA_ligase_like"/>
    <property type="match status" value="1"/>
</dbReference>
<dbReference type="CDD" id="cd00114">
    <property type="entry name" value="LIGANc"/>
    <property type="match status" value="1"/>
</dbReference>
<dbReference type="FunFam" id="1.10.150.20:FF:000007">
    <property type="entry name" value="DNA ligase"/>
    <property type="match status" value="1"/>
</dbReference>
<dbReference type="FunFam" id="1.10.287.610:FF:000002">
    <property type="entry name" value="DNA ligase"/>
    <property type="match status" value="1"/>
</dbReference>
<dbReference type="FunFam" id="2.40.50.140:FF:000012">
    <property type="entry name" value="DNA ligase"/>
    <property type="match status" value="1"/>
</dbReference>
<dbReference type="FunFam" id="3.30.470.30:FF:000001">
    <property type="entry name" value="DNA ligase"/>
    <property type="match status" value="1"/>
</dbReference>
<dbReference type="Gene3D" id="6.20.10.30">
    <property type="match status" value="1"/>
</dbReference>
<dbReference type="Gene3D" id="1.10.150.20">
    <property type="entry name" value="5' to 3' exonuclease, C-terminal subdomain"/>
    <property type="match status" value="2"/>
</dbReference>
<dbReference type="Gene3D" id="3.40.50.10190">
    <property type="entry name" value="BRCT domain"/>
    <property type="match status" value="1"/>
</dbReference>
<dbReference type="Gene3D" id="3.30.470.30">
    <property type="entry name" value="DNA ligase/mRNA capping enzyme"/>
    <property type="match status" value="1"/>
</dbReference>
<dbReference type="Gene3D" id="1.10.287.610">
    <property type="entry name" value="Helix hairpin bin"/>
    <property type="match status" value="1"/>
</dbReference>
<dbReference type="Gene3D" id="2.40.50.140">
    <property type="entry name" value="Nucleic acid-binding proteins"/>
    <property type="match status" value="1"/>
</dbReference>
<dbReference type="HAMAP" id="MF_01588">
    <property type="entry name" value="DNA_ligase_A"/>
    <property type="match status" value="1"/>
</dbReference>
<dbReference type="InterPro" id="IPR001357">
    <property type="entry name" value="BRCT_dom"/>
</dbReference>
<dbReference type="InterPro" id="IPR036420">
    <property type="entry name" value="BRCT_dom_sf"/>
</dbReference>
<dbReference type="InterPro" id="IPR041663">
    <property type="entry name" value="DisA/LigA_HHH"/>
</dbReference>
<dbReference type="InterPro" id="IPR001679">
    <property type="entry name" value="DNA_ligase"/>
</dbReference>
<dbReference type="InterPro" id="IPR018239">
    <property type="entry name" value="DNA_ligase_AS"/>
</dbReference>
<dbReference type="InterPro" id="IPR033136">
    <property type="entry name" value="DNA_ligase_CS"/>
</dbReference>
<dbReference type="InterPro" id="IPR013839">
    <property type="entry name" value="DNAligase_adenylation"/>
</dbReference>
<dbReference type="InterPro" id="IPR013840">
    <property type="entry name" value="DNAligase_N"/>
</dbReference>
<dbReference type="InterPro" id="IPR003583">
    <property type="entry name" value="Hlx-hairpin-Hlx_DNA-bd_motif"/>
</dbReference>
<dbReference type="InterPro" id="IPR012340">
    <property type="entry name" value="NA-bd_OB-fold"/>
</dbReference>
<dbReference type="InterPro" id="IPR004150">
    <property type="entry name" value="NAD_DNA_ligase_OB"/>
</dbReference>
<dbReference type="InterPro" id="IPR010994">
    <property type="entry name" value="RuvA_2-like"/>
</dbReference>
<dbReference type="InterPro" id="IPR004149">
    <property type="entry name" value="Znf_DNAligase_C4"/>
</dbReference>
<dbReference type="NCBIfam" id="TIGR00575">
    <property type="entry name" value="dnlj"/>
    <property type="match status" value="1"/>
</dbReference>
<dbReference type="NCBIfam" id="NF005932">
    <property type="entry name" value="PRK07956.1"/>
    <property type="match status" value="1"/>
</dbReference>
<dbReference type="PANTHER" id="PTHR23389">
    <property type="entry name" value="CHROMOSOME TRANSMISSION FIDELITY FACTOR 18"/>
    <property type="match status" value="1"/>
</dbReference>
<dbReference type="PANTHER" id="PTHR23389:SF9">
    <property type="entry name" value="DNA LIGASE"/>
    <property type="match status" value="1"/>
</dbReference>
<dbReference type="Pfam" id="PF00533">
    <property type="entry name" value="BRCT"/>
    <property type="match status" value="1"/>
</dbReference>
<dbReference type="Pfam" id="PF01653">
    <property type="entry name" value="DNA_ligase_aden"/>
    <property type="match status" value="1"/>
</dbReference>
<dbReference type="Pfam" id="PF03120">
    <property type="entry name" value="DNA_ligase_OB"/>
    <property type="match status" value="1"/>
</dbReference>
<dbReference type="Pfam" id="PF03119">
    <property type="entry name" value="DNA_ligase_ZBD"/>
    <property type="match status" value="1"/>
</dbReference>
<dbReference type="Pfam" id="PF12826">
    <property type="entry name" value="HHH_2"/>
    <property type="match status" value="1"/>
</dbReference>
<dbReference type="Pfam" id="PF14520">
    <property type="entry name" value="HHH_5"/>
    <property type="match status" value="1"/>
</dbReference>
<dbReference type="PIRSF" id="PIRSF001604">
    <property type="entry name" value="LigA"/>
    <property type="match status" value="1"/>
</dbReference>
<dbReference type="SMART" id="SM00292">
    <property type="entry name" value="BRCT"/>
    <property type="match status" value="1"/>
</dbReference>
<dbReference type="SMART" id="SM00278">
    <property type="entry name" value="HhH1"/>
    <property type="match status" value="3"/>
</dbReference>
<dbReference type="SMART" id="SM00532">
    <property type="entry name" value="LIGANc"/>
    <property type="match status" value="1"/>
</dbReference>
<dbReference type="SUPFAM" id="SSF52113">
    <property type="entry name" value="BRCT domain"/>
    <property type="match status" value="1"/>
</dbReference>
<dbReference type="SUPFAM" id="SSF56091">
    <property type="entry name" value="DNA ligase/mRNA capping enzyme, catalytic domain"/>
    <property type="match status" value="1"/>
</dbReference>
<dbReference type="SUPFAM" id="SSF50249">
    <property type="entry name" value="Nucleic acid-binding proteins"/>
    <property type="match status" value="1"/>
</dbReference>
<dbReference type="SUPFAM" id="SSF47781">
    <property type="entry name" value="RuvA domain 2-like"/>
    <property type="match status" value="1"/>
</dbReference>
<dbReference type="PROSITE" id="PS50172">
    <property type="entry name" value="BRCT"/>
    <property type="match status" value="1"/>
</dbReference>
<dbReference type="PROSITE" id="PS01055">
    <property type="entry name" value="DNA_LIGASE_N1"/>
    <property type="match status" value="1"/>
</dbReference>
<dbReference type="PROSITE" id="PS01056">
    <property type="entry name" value="DNA_LIGASE_N2"/>
    <property type="match status" value="1"/>
</dbReference>
<gene>
    <name evidence="1" type="primary">ligA</name>
    <name type="ordered locus">MGAS10270_Spy0628</name>
</gene>
<organism>
    <name type="scientific">Streptococcus pyogenes serotype M2 (strain MGAS10270)</name>
    <dbReference type="NCBI Taxonomy" id="370552"/>
    <lineage>
        <taxon>Bacteria</taxon>
        <taxon>Bacillati</taxon>
        <taxon>Bacillota</taxon>
        <taxon>Bacilli</taxon>
        <taxon>Lactobacillales</taxon>
        <taxon>Streptococcaceae</taxon>
        <taxon>Streptococcus</taxon>
    </lineage>
</organism>
<keyword id="KW-0227">DNA damage</keyword>
<keyword id="KW-0234">DNA repair</keyword>
<keyword id="KW-0235">DNA replication</keyword>
<keyword id="KW-0436">Ligase</keyword>
<keyword id="KW-0460">Magnesium</keyword>
<keyword id="KW-0464">Manganese</keyword>
<keyword id="KW-0479">Metal-binding</keyword>
<keyword id="KW-0520">NAD</keyword>
<keyword id="KW-0862">Zinc</keyword>
<comment type="function">
    <text evidence="1">DNA ligase that catalyzes the formation of phosphodiester linkages between 5'-phosphoryl and 3'-hydroxyl groups in double-stranded DNA using NAD as a coenzyme and as the energy source for the reaction. It is essential for DNA replication and repair of damaged DNA.</text>
</comment>
<comment type="catalytic activity">
    <reaction evidence="1">
        <text>NAD(+) + (deoxyribonucleotide)n-3'-hydroxyl + 5'-phospho-(deoxyribonucleotide)m = (deoxyribonucleotide)n+m + AMP + beta-nicotinamide D-nucleotide.</text>
        <dbReference type="EC" id="6.5.1.2"/>
    </reaction>
</comment>
<comment type="cofactor">
    <cofactor evidence="1">
        <name>Mg(2+)</name>
        <dbReference type="ChEBI" id="CHEBI:18420"/>
    </cofactor>
    <cofactor evidence="1">
        <name>Mn(2+)</name>
        <dbReference type="ChEBI" id="CHEBI:29035"/>
    </cofactor>
</comment>
<comment type="similarity">
    <text evidence="1">Belongs to the NAD-dependent DNA ligase family. LigA subfamily.</text>
</comment>
<proteinExistence type="inferred from homology"/>